<reference key="1">
    <citation type="journal article" date="2005" name="J. Bacteriol.">
        <title>Genomic sequence of an otitis media isolate of nontypeable Haemophilus influenzae: comparative study with H. influenzae serotype d, strain KW20.</title>
        <authorList>
            <person name="Harrison A."/>
            <person name="Dyer D.W."/>
            <person name="Gillaspy A."/>
            <person name="Ray W.C."/>
            <person name="Mungur R."/>
            <person name="Carson M.B."/>
            <person name="Zhong H."/>
            <person name="Gipson J."/>
            <person name="Gipson M."/>
            <person name="Johnson L.S."/>
            <person name="Lewis L."/>
            <person name="Bakaletz L.O."/>
            <person name="Munson R.S. Jr."/>
        </authorList>
    </citation>
    <scope>NUCLEOTIDE SEQUENCE [LARGE SCALE GENOMIC DNA]</scope>
    <source>
        <strain>86-028NP</strain>
    </source>
</reference>
<proteinExistence type="inferred from homology"/>
<gene>
    <name evidence="1" type="primary">rpsS</name>
    <name type="ordered locus">NTHI0942</name>
</gene>
<organism>
    <name type="scientific">Haemophilus influenzae (strain 86-028NP)</name>
    <dbReference type="NCBI Taxonomy" id="281310"/>
    <lineage>
        <taxon>Bacteria</taxon>
        <taxon>Pseudomonadati</taxon>
        <taxon>Pseudomonadota</taxon>
        <taxon>Gammaproteobacteria</taxon>
        <taxon>Pasteurellales</taxon>
        <taxon>Pasteurellaceae</taxon>
        <taxon>Haemophilus</taxon>
    </lineage>
</organism>
<dbReference type="EMBL" id="CP000057">
    <property type="protein sequence ID" value="AAX87829.1"/>
    <property type="molecule type" value="Genomic_DNA"/>
</dbReference>
<dbReference type="RefSeq" id="WP_005539416.1">
    <property type="nucleotide sequence ID" value="NC_007146.2"/>
</dbReference>
<dbReference type="SMR" id="Q4QMB8"/>
<dbReference type="GeneID" id="93298793"/>
<dbReference type="KEGG" id="hit:NTHI0942"/>
<dbReference type="HOGENOM" id="CLU_144911_0_1_6"/>
<dbReference type="Proteomes" id="UP000002525">
    <property type="component" value="Chromosome"/>
</dbReference>
<dbReference type="GO" id="GO:0005737">
    <property type="term" value="C:cytoplasm"/>
    <property type="evidence" value="ECO:0007669"/>
    <property type="project" value="UniProtKB-ARBA"/>
</dbReference>
<dbReference type="GO" id="GO:0015935">
    <property type="term" value="C:small ribosomal subunit"/>
    <property type="evidence" value="ECO:0007669"/>
    <property type="project" value="InterPro"/>
</dbReference>
<dbReference type="GO" id="GO:0019843">
    <property type="term" value="F:rRNA binding"/>
    <property type="evidence" value="ECO:0007669"/>
    <property type="project" value="UniProtKB-UniRule"/>
</dbReference>
<dbReference type="GO" id="GO:0003735">
    <property type="term" value="F:structural constituent of ribosome"/>
    <property type="evidence" value="ECO:0007669"/>
    <property type="project" value="InterPro"/>
</dbReference>
<dbReference type="GO" id="GO:0000028">
    <property type="term" value="P:ribosomal small subunit assembly"/>
    <property type="evidence" value="ECO:0007669"/>
    <property type="project" value="TreeGrafter"/>
</dbReference>
<dbReference type="GO" id="GO:0006412">
    <property type="term" value="P:translation"/>
    <property type="evidence" value="ECO:0007669"/>
    <property type="project" value="UniProtKB-UniRule"/>
</dbReference>
<dbReference type="FunFam" id="3.30.860.10:FF:000001">
    <property type="entry name" value="30S ribosomal protein S19"/>
    <property type="match status" value="1"/>
</dbReference>
<dbReference type="Gene3D" id="3.30.860.10">
    <property type="entry name" value="30s Ribosomal Protein S19, Chain A"/>
    <property type="match status" value="1"/>
</dbReference>
<dbReference type="HAMAP" id="MF_00531">
    <property type="entry name" value="Ribosomal_uS19"/>
    <property type="match status" value="1"/>
</dbReference>
<dbReference type="InterPro" id="IPR002222">
    <property type="entry name" value="Ribosomal_uS19"/>
</dbReference>
<dbReference type="InterPro" id="IPR005732">
    <property type="entry name" value="Ribosomal_uS19_bac-type"/>
</dbReference>
<dbReference type="InterPro" id="IPR020934">
    <property type="entry name" value="Ribosomal_uS19_CS"/>
</dbReference>
<dbReference type="InterPro" id="IPR023575">
    <property type="entry name" value="Ribosomal_uS19_SF"/>
</dbReference>
<dbReference type="NCBIfam" id="TIGR01050">
    <property type="entry name" value="rpsS_bact"/>
    <property type="match status" value="1"/>
</dbReference>
<dbReference type="PANTHER" id="PTHR11880">
    <property type="entry name" value="RIBOSOMAL PROTEIN S19P FAMILY MEMBER"/>
    <property type="match status" value="1"/>
</dbReference>
<dbReference type="PANTHER" id="PTHR11880:SF8">
    <property type="entry name" value="SMALL RIBOSOMAL SUBUNIT PROTEIN US19M"/>
    <property type="match status" value="1"/>
</dbReference>
<dbReference type="Pfam" id="PF00203">
    <property type="entry name" value="Ribosomal_S19"/>
    <property type="match status" value="1"/>
</dbReference>
<dbReference type="PIRSF" id="PIRSF002144">
    <property type="entry name" value="Ribosomal_S19"/>
    <property type="match status" value="1"/>
</dbReference>
<dbReference type="PRINTS" id="PR00975">
    <property type="entry name" value="RIBOSOMALS19"/>
</dbReference>
<dbReference type="SUPFAM" id="SSF54570">
    <property type="entry name" value="Ribosomal protein S19"/>
    <property type="match status" value="1"/>
</dbReference>
<dbReference type="PROSITE" id="PS00323">
    <property type="entry name" value="RIBOSOMAL_S19"/>
    <property type="match status" value="1"/>
</dbReference>
<accession>Q4QMB8</accession>
<keyword id="KW-0687">Ribonucleoprotein</keyword>
<keyword id="KW-0689">Ribosomal protein</keyword>
<keyword id="KW-0694">RNA-binding</keyword>
<keyword id="KW-0699">rRNA-binding</keyword>
<protein>
    <recommendedName>
        <fullName evidence="1">Small ribosomal subunit protein uS19</fullName>
    </recommendedName>
    <alternativeName>
        <fullName evidence="2">30S ribosomal protein S19</fullName>
    </alternativeName>
</protein>
<name>RS19_HAEI8</name>
<evidence type="ECO:0000255" key="1">
    <source>
        <dbReference type="HAMAP-Rule" id="MF_00531"/>
    </source>
</evidence>
<evidence type="ECO:0000305" key="2"/>
<comment type="function">
    <text evidence="1">Protein S19 forms a complex with S13 that binds strongly to the 16S ribosomal RNA.</text>
</comment>
<comment type="similarity">
    <text evidence="1">Belongs to the universal ribosomal protein uS19 family.</text>
</comment>
<sequence length="91" mass="10259">MPRSLKKGPFLDLHLLKKVEKAVESGDKKPIKTWSRRSMIIPSMIGLTIAVHNGRQHVPVYVSDEMIGHKLGEFAPTRTYRGHAADKKAKK</sequence>
<feature type="chain" id="PRO_0000265368" description="Small ribosomal subunit protein uS19">
    <location>
        <begin position="1"/>
        <end position="91"/>
    </location>
</feature>